<name>RL22_PARDP</name>
<comment type="function">
    <text evidence="1">This protein binds specifically to 23S rRNA; its binding is stimulated by other ribosomal proteins, e.g. L4, L17, and L20. It is important during the early stages of 50S assembly. It makes multiple contacts with different domains of the 23S rRNA in the assembled 50S subunit and ribosome (By similarity).</text>
</comment>
<comment type="function">
    <text evidence="1">The globular domain of the protein is located near the polypeptide exit tunnel on the outside of the subunit, while an extended beta-hairpin is found that lines the wall of the exit tunnel in the center of the 70S ribosome.</text>
</comment>
<comment type="subunit">
    <text evidence="1">Part of the 50S ribosomal subunit.</text>
</comment>
<comment type="similarity">
    <text evidence="1">Belongs to the universal ribosomal protein uL22 family.</text>
</comment>
<accession>A1B032</accession>
<proteinExistence type="inferred from homology"/>
<feature type="chain" id="PRO_1000052620" description="Large ribosomal subunit protein uL22">
    <location>
        <begin position="1"/>
        <end position="126"/>
    </location>
</feature>
<dbReference type="EMBL" id="CP000489">
    <property type="protein sequence ID" value="ABL68876.1"/>
    <property type="molecule type" value="Genomic_DNA"/>
</dbReference>
<dbReference type="RefSeq" id="WP_011747105.1">
    <property type="nucleotide sequence ID" value="NC_008686.1"/>
</dbReference>
<dbReference type="SMR" id="A1B032"/>
<dbReference type="STRING" id="318586.Pden_0764"/>
<dbReference type="EnsemblBacteria" id="ABL68876">
    <property type="protein sequence ID" value="ABL68876"/>
    <property type="gene ID" value="Pden_0764"/>
</dbReference>
<dbReference type="GeneID" id="93451988"/>
<dbReference type="KEGG" id="pde:Pden_0764"/>
<dbReference type="eggNOG" id="COG0091">
    <property type="taxonomic scope" value="Bacteria"/>
</dbReference>
<dbReference type="HOGENOM" id="CLU_083987_3_0_5"/>
<dbReference type="OrthoDB" id="9805969at2"/>
<dbReference type="Proteomes" id="UP000000361">
    <property type="component" value="Chromosome 1"/>
</dbReference>
<dbReference type="GO" id="GO:0022625">
    <property type="term" value="C:cytosolic large ribosomal subunit"/>
    <property type="evidence" value="ECO:0007669"/>
    <property type="project" value="TreeGrafter"/>
</dbReference>
<dbReference type="GO" id="GO:0019843">
    <property type="term" value="F:rRNA binding"/>
    <property type="evidence" value="ECO:0007669"/>
    <property type="project" value="UniProtKB-UniRule"/>
</dbReference>
<dbReference type="GO" id="GO:0003735">
    <property type="term" value="F:structural constituent of ribosome"/>
    <property type="evidence" value="ECO:0007669"/>
    <property type="project" value="InterPro"/>
</dbReference>
<dbReference type="GO" id="GO:0006412">
    <property type="term" value="P:translation"/>
    <property type="evidence" value="ECO:0007669"/>
    <property type="project" value="UniProtKB-UniRule"/>
</dbReference>
<dbReference type="CDD" id="cd00336">
    <property type="entry name" value="Ribosomal_L22"/>
    <property type="match status" value="1"/>
</dbReference>
<dbReference type="Gene3D" id="3.90.470.10">
    <property type="entry name" value="Ribosomal protein L22/L17"/>
    <property type="match status" value="1"/>
</dbReference>
<dbReference type="HAMAP" id="MF_01331_B">
    <property type="entry name" value="Ribosomal_uL22_B"/>
    <property type="match status" value="1"/>
</dbReference>
<dbReference type="InterPro" id="IPR001063">
    <property type="entry name" value="Ribosomal_uL22"/>
</dbReference>
<dbReference type="InterPro" id="IPR005727">
    <property type="entry name" value="Ribosomal_uL22_bac/chlpt-type"/>
</dbReference>
<dbReference type="InterPro" id="IPR047867">
    <property type="entry name" value="Ribosomal_uL22_bac/org-type"/>
</dbReference>
<dbReference type="InterPro" id="IPR036394">
    <property type="entry name" value="Ribosomal_uL22_sf"/>
</dbReference>
<dbReference type="NCBIfam" id="TIGR01044">
    <property type="entry name" value="rplV_bact"/>
    <property type="match status" value="1"/>
</dbReference>
<dbReference type="PANTHER" id="PTHR13501">
    <property type="entry name" value="CHLOROPLAST 50S RIBOSOMAL PROTEIN L22-RELATED"/>
    <property type="match status" value="1"/>
</dbReference>
<dbReference type="PANTHER" id="PTHR13501:SF8">
    <property type="entry name" value="LARGE RIBOSOMAL SUBUNIT PROTEIN UL22M"/>
    <property type="match status" value="1"/>
</dbReference>
<dbReference type="Pfam" id="PF00237">
    <property type="entry name" value="Ribosomal_L22"/>
    <property type="match status" value="1"/>
</dbReference>
<dbReference type="SUPFAM" id="SSF54843">
    <property type="entry name" value="Ribosomal protein L22"/>
    <property type="match status" value="1"/>
</dbReference>
<keyword id="KW-1185">Reference proteome</keyword>
<keyword id="KW-0687">Ribonucleoprotein</keyword>
<keyword id="KW-0689">Ribosomal protein</keyword>
<keyword id="KW-0694">RNA-binding</keyword>
<keyword id="KW-0699">rRNA-binding</keyword>
<sequence length="126" mass="14146">MGKEQNPRRVAENEAFAKTKMLRTSPQKLNLVAAMIRGKKVDKALADLTFSSKRIAGDVKKCLQSAIANAENNHNLDVDNLIVAEAWVGKNLVMKRGRPRARGRYGKIMKPFSEITIKVRQVEERA</sequence>
<protein>
    <recommendedName>
        <fullName evidence="1">Large ribosomal subunit protein uL22</fullName>
    </recommendedName>
    <alternativeName>
        <fullName evidence="2">50S ribosomal protein L22</fullName>
    </alternativeName>
</protein>
<reference key="1">
    <citation type="submission" date="2006-12" db="EMBL/GenBank/DDBJ databases">
        <title>Complete sequence of chromosome 1 of Paracoccus denitrificans PD1222.</title>
        <authorList>
            <person name="Copeland A."/>
            <person name="Lucas S."/>
            <person name="Lapidus A."/>
            <person name="Barry K."/>
            <person name="Detter J.C."/>
            <person name="Glavina del Rio T."/>
            <person name="Hammon N."/>
            <person name="Israni S."/>
            <person name="Dalin E."/>
            <person name="Tice H."/>
            <person name="Pitluck S."/>
            <person name="Munk A.C."/>
            <person name="Brettin T."/>
            <person name="Bruce D."/>
            <person name="Han C."/>
            <person name="Tapia R."/>
            <person name="Gilna P."/>
            <person name="Schmutz J."/>
            <person name="Larimer F."/>
            <person name="Land M."/>
            <person name="Hauser L."/>
            <person name="Kyrpides N."/>
            <person name="Lykidis A."/>
            <person name="Spiro S."/>
            <person name="Richardson D.J."/>
            <person name="Moir J.W.B."/>
            <person name="Ferguson S.J."/>
            <person name="van Spanning R.J.M."/>
            <person name="Richardson P."/>
        </authorList>
    </citation>
    <scope>NUCLEOTIDE SEQUENCE [LARGE SCALE GENOMIC DNA]</scope>
    <source>
        <strain>Pd 1222</strain>
    </source>
</reference>
<evidence type="ECO:0000255" key="1">
    <source>
        <dbReference type="HAMAP-Rule" id="MF_01331"/>
    </source>
</evidence>
<evidence type="ECO:0000305" key="2"/>
<gene>
    <name evidence="1" type="primary">rplV</name>
    <name type="ordered locus">Pden_0764</name>
</gene>
<organism>
    <name type="scientific">Paracoccus denitrificans (strain Pd 1222)</name>
    <dbReference type="NCBI Taxonomy" id="318586"/>
    <lineage>
        <taxon>Bacteria</taxon>
        <taxon>Pseudomonadati</taxon>
        <taxon>Pseudomonadota</taxon>
        <taxon>Alphaproteobacteria</taxon>
        <taxon>Rhodobacterales</taxon>
        <taxon>Paracoccaceae</taxon>
        <taxon>Paracoccus</taxon>
    </lineage>
</organism>